<reference key="1">
    <citation type="journal article" date="2002" name="DNA Res.">
        <title>Complete genomic sequence of nitrogen-fixing symbiotic bacterium Bradyrhizobium japonicum USDA110.</title>
        <authorList>
            <person name="Kaneko T."/>
            <person name="Nakamura Y."/>
            <person name="Sato S."/>
            <person name="Minamisawa K."/>
            <person name="Uchiumi T."/>
            <person name="Sasamoto S."/>
            <person name="Watanabe A."/>
            <person name="Idesawa K."/>
            <person name="Iriguchi M."/>
            <person name="Kawashima K."/>
            <person name="Kohara M."/>
            <person name="Matsumoto M."/>
            <person name="Shimpo S."/>
            <person name="Tsuruoka H."/>
            <person name="Wada T."/>
            <person name="Yamada M."/>
            <person name="Tabata S."/>
        </authorList>
    </citation>
    <scope>NUCLEOTIDE SEQUENCE [LARGE SCALE GENOMIC DNA]</scope>
    <source>
        <strain>JCM 10833 / BCRC 13528 / IAM 13628 / NBRC 14792 / USDA 110</strain>
    </source>
</reference>
<keyword id="KW-0997">Cell inner membrane</keyword>
<keyword id="KW-1003">Cell membrane</keyword>
<keyword id="KW-0406">Ion transport</keyword>
<keyword id="KW-0472">Membrane</keyword>
<keyword id="KW-1185">Reference proteome</keyword>
<keyword id="KW-0769">Symport</keyword>
<keyword id="KW-0812">Transmembrane</keyword>
<keyword id="KW-1133">Transmembrane helix</keyword>
<keyword id="KW-0813">Transport</keyword>
<comment type="function">
    <text evidence="1">H(+)-stimulated, divalent metal cation uptake system.</text>
</comment>
<comment type="subcellular location">
    <subcellularLocation>
        <location evidence="1">Cell inner membrane</location>
        <topology evidence="1">Multi-pass membrane protein</topology>
    </subcellularLocation>
</comment>
<comment type="similarity">
    <text evidence="1">Belongs to the NRAMP family.</text>
</comment>
<evidence type="ECO:0000255" key="1">
    <source>
        <dbReference type="HAMAP-Rule" id="MF_00221"/>
    </source>
</evidence>
<protein>
    <recommendedName>
        <fullName evidence="1">Divalent metal cation transporter MntH</fullName>
    </recommendedName>
</protein>
<feature type="chain" id="PRO_0000212612" description="Divalent metal cation transporter MntH">
    <location>
        <begin position="1"/>
        <end position="450"/>
    </location>
</feature>
<feature type="transmembrane region" description="Helical" evidence="1">
    <location>
        <begin position="44"/>
        <end position="64"/>
    </location>
</feature>
<feature type="transmembrane region" description="Helical" evidence="1">
    <location>
        <begin position="77"/>
        <end position="97"/>
    </location>
</feature>
<feature type="transmembrane region" description="Helical" evidence="1">
    <location>
        <begin position="121"/>
        <end position="141"/>
    </location>
</feature>
<feature type="transmembrane region" description="Helical" evidence="1">
    <location>
        <begin position="152"/>
        <end position="172"/>
    </location>
</feature>
<feature type="transmembrane region" description="Helical" evidence="1">
    <location>
        <begin position="181"/>
        <end position="201"/>
    </location>
</feature>
<feature type="transmembrane region" description="Helical" evidence="1">
    <location>
        <begin position="218"/>
        <end position="238"/>
    </location>
</feature>
<feature type="transmembrane region" description="Helical" evidence="1">
    <location>
        <begin position="273"/>
        <end position="293"/>
    </location>
</feature>
<feature type="transmembrane region" description="Helical" evidence="1">
    <location>
        <begin position="310"/>
        <end position="330"/>
    </location>
</feature>
<feature type="transmembrane region" description="Helical" evidence="1">
    <location>
        <begin position="366"/>
        <end position="386"/>
    </location>
</feature>
<feature type="transmembrane region" description="Helical" evidence="1">
    <location>
        <begin position="387"/>
        <end position="407"/>
    </location>
</feature>
<feature type="transmembrane region" description="Helical" evidence="1">
    <location>
        <begin position="419"/>
        <end position="439"/>
    </location>
</feature>
<gene>
    <name evidence="1" type="primary">mntH</name>
    <name type="ordered locus">bll5044</name>
</gene>
<name>MNTH_BRADU</name>
<accession>Q89K67</accession>
<organism>
    <name type="scientific">Bradyrhizobium diazoefficiens (strain JCM 10833 / BCRC 13528 / IAM 13628 / NBRC 14792 / USDA 110)</name>
    <dbReference type="NCBI Taxonomy" id="224911"/>
    <lineage>
        <taxon>Bacteria</taxon>
        <taxon>Pseudomonadati</taxon>
        <taxon>Pseudomonadota</taxon>
        <taxon>Alphaproteobacteria</taxon>
        <taxon>Hyphomicrobiales</taxon>
        <taxon>Nitrobacteraceae</taxon>
        <taxon>Bradyrhizobium</taxon>
    </lineage>
</organism>
<proteinExistence type="inferred from homology"/>
<dbReference type="EMBL" id="BA000040">
    <property type="protein sequence ID" value="BAC50309.1"/>
    <property type="molecule type" value="Genomic_DNA"/>
</dbReference>
<dbReference type="RefSeq" id="NP_771684.1">
    <property type="nucleotide sequence ID" value="NC_004463.1"/>
</dbReference>
<dbReference type="RefSeq" id="WP_011087805.1">
    <property type="nucleotide sequence ID" value="NC_004463.1"/>
</dbReference>
<dbReference type="SMR" id="Q89K67"/>
<dbReference type="FunCoup" id="Q89K67">
    <property type="interactions" value="399"/>
</dbReference>
<dbReference type="STRING" id="224911.AAV28_22585"/>
<dbReference type="TCDB" id="2.A.55.2.6">
    <property type="family name" value="the metal ion (mn(2+)-iron) transporter (nramp) family"/>
</dbReference>
<dbReference type="EnsemblBacteria" id="BAC50309">
    <property type="protein sequence ID" value="BAC50309"/>
    <property type="gene ID" value="BAC50309"/>
</dbReference>
<dbReference type="GeneID" id="46492050"/>
<dbReference type="KEGG" id="bja:bll5044"/>
<dbReference type="PATRIC" id="fig|224911.44.peg.4909"/>
<dbReference type="eggNOG" id="COG1914">
    <property type="taxonomic scope" value="Bacteria"/>
</dbReference>
<dbReference type="HOGENOM" id="CLU_020088_2_0_5"/>
<dbReference type="InParanoid" id="Q89K67"/>
<dbReference type="OrthoDB" id="9787548at2"/>
<dbReference type="PhylomeDB" id="Q89K67"/>
<dbReference type="Proteomes" id="UP000002526">
    <property type="component" value="Chromosome"/>
</dbReference>
<dbReference type="GO" id="GO:0005886">
    <property type="term" value="C:plasma membrane"/>
    <property type="evidence" value="ECO:0000318"/>
    <property type="project" value="GO_Central"/>
</dbReference>
<dbReference type="GO" id="GO:0015086">
    <property type="term" value="F:cadmium ion transmembrane transporter activity"/>
    <property type="evidence" value="ECO:0000318"/>
    <property type="project" value="GO_Central"/>
</dbReference>
<dbReference type="GO" id="GO:0005384">
    <property type="term" value="F:manganese ion transmembrane transporter activity"/>
    <property type="evidence" value="ECO:0000318"/>
    <property type="project" value="GO_Central"/>
</dbReference>
<dbReference type="GO" id="GO:0046872">
    <property type="term" value="F:metal ion binding"/>
    <property type="evidence" value="ECO:0007669"/>
    <property type="project" value="UniProtKB-UniRule"/>
</dbReference>
<dbReference type="GO" id="GO:0015293">
    <property type="term" value="F:symporter activity"/>
    <property type="evidence" value="ECO:0007669"/>
    <property type="project" value="UniProtKB-UniRule"/>
</dbReference>
<dbReference type="GO" id="GO:0071281">
    <property type="term" value="P:cellular response to iron ion"/>
    <property type="evidence" value="ECO:0000269"/>
    <property type="project" value="CollecTF"/>
</dbReference>
<dbReference type="GO" id="GO:0034755">
    <property type="term" value="P:iron ion transmembrane transport"/>
    <property type="evidence" value="ECO:0000318"/>
    <property type="project" value="GO_Central"/>
</dbReference>
<dbReference type="GO" id="GO:0006828">
    <property type="term" value="P:manganese ion transport"/>
    <property type="evidence" value="ECO:0000318"/>
    <property type="project" value="GO_Central"/>
</dbReference>
<dbReference type="HAMAP" id="MF_00221">
    <property type="entry name" value="NRAMP"/>
    <property type="match status" value="1"/>
</dbReference>
<dbReference type="InterPro" id="IPR001046">
    <property type="entry name" value="NRAMP_fam"/>
</dbReference>
<dbReference type="NCBIfam" id="TIGR01197">
    <property type="entry name" value="nramp"/>
    <property type="match status" value="1"/>
</dbReference>
<dbReference type="NCBIfam" id="NF037982">
    <property type="entry name" value="Nramp_1"/>
    <property type="match status" value="1"/>
</dbReference>
<dbReference type="NCBIfam" id="NF001923">
    <property type="entry name" value="PRK00701.1"/>
    <property type="match status" value="1"/>
</dbReference>
<dbReference type="PANTHER" id="PTHR11706:SF33">
    <property type="entry name" value="NATURAL RESISTANCE-ASSOCIATED MACROPHAGE PROTEIN 2"/>
    <property type="match status" value="1"/>
</dbReference>
<dbReference type="PANTHER" id="PTHR11706">
    <property type="entry name" value="SOLUTE CARRIER PROTEIN FAMILY 11 MEMBER"/>
    <property type="match status" value="1"/>
</dbReference>
<dbReference type="Pfam" id="PF01566">
    <property type="entry name" value="Nramp"/>
    <property type="match status" value="1"/>
</dbReference>
<dbReference type="PRINTS" id="PR00447">
    <property type="entry name" value="NATRESASSCMP"/>
</dbReference>
<sequence length="450" mass="47926">MDARSPDLTTDAAGWRTDVPTTKSLAEVNASVALPTAGVWWRRLLAFVGPGYLVSVGYMDPGNWATDLAGGSKFGYTLLSVILLSNLMAILLQSLAARLGIVTDRDLAQACRATYSPAVNFLLWLACEAAIIACDLAEVIGTAIALKLLFGIPLIGGALIAALDAFLLLLLMNRGFRFLEAFVIALLAVIAVCFAVQIVAAAPPVAEVLHGFMPKSEIFTNPEMLYIAIGIIGATVMPHNLYLHSSIVQTRAYERNETGRREAIKWATTDSTIALMLALFINAAILVVAAATFHKSGHSDVAEIGQAFELLSPLLGLGIASTLFAIALLASGLNSTVTATLAGQIVMEGFLDLRLPSWARRLLTRGIAIIPVIIVTAIYGERGTADLLVFSQVVLSMQLPFAVIPLVRFVSDRRKMGKFAISPYVAAIAWIVAGVIVVLNLKLLADTLLG</sequence>